<accession>Q2HRC7</accession>
<dbReference type="EMBL" id="AF148805">
    <property type="protein sequence ID" value="ABD28856.1"/>
    <property type="molecule type" value="Genomic_DNA"/>
</dbReference>
<dbReference type="RefSeq" id="YP_001129358.1">
    <property type="nucleotide sequence ID" value="NC_009333.1"/>
</dbReference>
<dbReference type="SMR" id="Q2HRC7"/>
<dbReference type="BioGRID" id="1776952">
    <property type="interactions" value="5"/>
</dbReference>
<dbReference type="IntAct" id="Q2HRC7">
    <property type="interactions" value="2"/>
</dbReference>
<dbReference type="DNASU" id="4961449"/>
<dbReference type="GeneID" id="4961449"/>
<dbReference type="KEGG" id="vg:4961449"/>
<dbReference type="Proteomes" id="UP000000942">
    <property type="component" value="Segment"/>
</dbReference>
<dbReference type="GO" id="GO:0005615">
    <property type="term" value="C:extracellular space"/>
    <property type="evidence" value="ECO:0007669"/>
    <property type="project" value="InterPro"/>
</dbReference>
<dbReference type="GO" id="GO:0005125">
    <property type="term" value="F:cytokine activity"/>
    <property type="evidence" value="ECO:0007669"/>
    <property type="project" value="InterPro"/>
</dbReference>
<dbReference type="GO" id="GO:0005138">
    <property type="term" value="F:interleukin-6 receptor binding"/>
    <property type="evidence" value="ECO:0007669"/>
    <property type="project" value="InterPro"/>
</dbReference>
<dbReference type="GO" id="GO:0006955">
    <property type="term" value="P:immune response"/>
    <property type="evidence" value="ECO:0007669"/>
    <property type="project" value="InterPro"/>
</dbReference>
<dbReference type="Gene3D" id="1.20.1250.10">
    <property type="match status" value="1"/>
</dbReference>
<dbReference type="InterPro" id="IPR009079">
    <property type="entry name" value="4_helix_cytokine-like_core"/>
</dbReference>
<dbReference type="InterPro" id="IPR003574">
    <property type="entry name" value="IL-6-like"/>
</dbReference>
<dbReference type="InterPro" id="IPR030474">
    <property type="entry name" value="IL-6/GCSF/MGF"/>
</dbReference>
<dbReference type="PANTHER" id="PTHR48494">
    <property type="entry name" value="INTERLEUKIN-6"/>
    <property type="match status" value="1"/>
</dbReference>
<dbReference type="PANTHER" id="PTHR48494:SF1">
    <property type="entry name" value="INTERLEUKIN-6"/>
    <property type="match status" value="1"/>
</dbReference>
<dbReference type="Pfam" id="PF00489">
    <property type="entry name" value="IL6"/>
    <property type="match status" value="1"/>
</dbReference>
<dbReference type="PRINTS" id="PR00433">
    <property type="entry name" value="IL6GCSFMGF"/>
</dbReference>
<dbReference type="PRINTS" id="PR00434">
    <property type="entry name" value="INTERLEUKIN6"/>
</dbReference>
<dbReference type="SMART" id="SM00126">
    <property type="entry name" value="IL6"/>
    <property type="match status" value="1"/>
</dbReference>
<dbReference type="SUPFAM" id="SSF47266">
    <property type="entry name" value="4-helical cytokines"/>
    <property type="match status" value="1"/>
</dbReference>
<comment type="function">
    <text evidence="2 3 4">Initiates signal transduction through binding to interleukin-6 receptor subunit beta IL6ST, independently of the cognate IL6 receptor IL6R. In infected primary effusion lymphoma cells, promotes proliferation of cells, protects them from apoptosis, and promotes immune evasion of interferon activity. Also drives blood to lymphatic endothelial cell differentiation.</text>
</comment>
<comment type="subunit">
    <text evidence="2">Interacts with host IL6ST.</text>
</comment>
<comment type="interaction">
    <interactant intactId="EBI-9007403">
        <id>Q2HRC7</id>
    </interactant>
    <interactant intactId="EBI-299383">
        <id>P08887</id>
        <label>IL6R</label>
    </interactant>
    <organismsDiffer>true</organismsDiffer>
    <experiments>3</experiments>
</comment>
<comment type="interaction">
    <interactant intactId="EBI-9007403">
        <id>Q2HRC7</id>
    </interactant>
    <interactant intactId="EBI-1030834">
        <id>P40189</id>
        <label>IL6ST</label>
    </interactant>
    <organismsDiffer>true</organismsDiffer>
    <experiments>2</experiments>
</comment>
<comment type="similarity">
    <text evidence="5">Belongs to the IL-6 superfamily.</text>
</comment>
<proteinExistence type="evidence at protein level"/>
<gene>
    <name type="primary">K2</name>
</gene>
<organismHost>
    <name type="scientific">Homo sapiens</name>
    <name type="common">Human</name>
    <dbReference type="NCBI Taxonomy" id="9606"/>
</organismHost>
<name>VIL6_HHV8P</name>
<evidence type="ECO:0000255" key="1"/>
<evidence type="ECO:0000269" key="2">
    <source>
    </source>
</evidence>
<evidence type="ECO:0000269" key="3">
    <source>
    </source>
</evidence>
<evidence type="ECO:0000269" key="4">
    <source>
    </source>
</evidence>
<evidence type="ECO:0000305" key="5"/>
<reference key="1">
    <citation type="journal article" date="1999" name="J. Virol.">
        <title>Identification of a spliced gene from Kaposi's sarcoma-associated herpesvirus encoding a protein with similarities to latent membrane proteins 1 and 2A of Epstein-Barr virus.</title>
        <authorList>
            <person name="Glenn M."/>
            <person name="Rainbow L."/>
            <person name="Aurade F."/>
            <person name="Davison A."/>
            <person name="Schulz T.F."/>
        </authorList>
    </citation>
    <scope>NUCLEOTIDE SEQUENCE [LARGE SCALE GENOMIC DNA]</scope>
</reference>
<reference key="2">
    <citation type="journal article" date="2006" name="J. Gen. Virol.">
        <title>Kaposi's sarcoma-associated herpesvirus immune modulation: an overview.</title>
        <authorList>
            <person name="Rezaee S.A.R."/>
            <person name="Cunningham C."/>
            <person name="Davison A.J."/>
            <person name="Blackbourn D.J."/>
        </authorList>
    </citation>
    <scope>NUCLEOTIDE SEQUENCE [LARGE SCALE GENOMIC DNA]</scope>
</reference>
<reference key="3">
    <citation type="journal article" date="2001" name="J. Virol.">
        <title>Detection of direct binding of human herpesvirus 8-encoded interleukin-6 (vIL-6) to both gp130 and IL-6 receptor (IL-6R) and identification of amino acid residues of vIL-6 important for IL-6R-dependent and -independent signaling.</title>
        <authorList>
            <person name="Li H."/>
            <person name="Wang H."/>
            <person name="Nicholas J."/>
        </authorList>
    </citation>
    <scope>FUNCTION</scope>
    <scope>INTERACTION WITH HOST IL6ST</scope>
</reference>
<reference key="4">
    <citation type="journal article" date="2002" name="Science">
        <title>Viral IL-6-induced cell proliferation and immune evasion of interferon activity.</title>
        <authorList>
            <person name="Chatterjee M."/>
            <person name="Osborne J."/>
            <person name="Bestetti G."/>
            <person name="Chang Y."/>
            <person name="Moore P.S."/>
        </authorList>
    </citation>
    <scope>FUNCTION</scope>
</reference>
<reference key="5">
    <citation type="journal article" date="2011" name="J. Interferon Cytokine Res.">
        <title>Viral interleukin-6: role in Kaposi's sarcoma-associated herpesvirus: associated malignancies.</title>
        <authorList>
            <person name="Sakakibara S."/>
            <person name="Tosato G."/>
        </authorList>
    </citation>
    <scope>REVIEW ON FUNCTION</scope>
</reference>
<reference key="6">
    <citation type="journal article" date="2012" name="Virology">
        <title>The KSHV viral IL-6 homolog is sufficient to induce blood to lymphatic endothelial cell differentiation.</title>
        <authorList>
            <person name="Morris V.A."/>
            <person name="Punjabi A.S."/>
            <person name="Wells R.C."/>
            <person name="Wittkopp C.J."/>
            <person name="Vart R."/>
            <person name="Lagunoff M."/>
        </authorList>
    </citation>
    <scope>FUNCTION</scope>
</reference>
<organism>
    <name type="scientific">Human herpesvirus 8 type P (isolate GK18)</name>
    <name type="common">HHV-8</name>
    <name type="synonym">Kaposi's sarcoma-associated herpesvirus</name>
    <dbReference type="NCBI Taxonomy" id="868565"/>
    <lineage>
        <taxon>Viruses</taxon>
        <taxon>Duplodnaviria</taxon>
        <taxon>Heunggongvirae</taxon>
        <taxon>Peploviricota</taxon>
        <taxon>Herviviricetes</taxon>
        <taxon>Herpesvirales</taxon>
        <taxon>Orthoherpesviridae</taxon>
        <taxon>Gammaherpesvirinae</taxon>
        <taxon>Rhadinovirus</taxon>
        <taxon>Rhadinovirus humangamma8</taxon>
        <taxon>Human herpesvirus 8</taxon>
    </lineage>
</organism>
<keyword id="KW-1125">Evasion of host immunity by viral interleukin-like protein</keyword>
<keyword id="KW-0945">Host-virus interaction</keyword>
<keyword id="KW-1185">Reference proteome</keyword>
<keyword id="KW-0732">Signal</keyword>
<keyword id="KW-0899">Viral immunoevasion</keyword>
<sequence>MRWFKLWSILLVGSLLVSGTRGKLPDAPEFEKDLLIQRLNWMLWVIDECFRDLCYRTGICKGILEPAAIFHLKLPAINDTDHCGLIGFNETSCLKKLADGFFEFEVLFKFLTTEFGKSVINVDVMELLTKTLGWDIQEELNKLTKTHYSPPKFDRGLLGRLQGLKYWVRHFASFYVLSAMEKFAGQAVRVLNSIPDVTPDVHDK</sequence>
<feature type="signal peptide" evidence="1">
    <location>
        <begin position="1"/>
        <end position="22"/>
    </location>
</feature>
<feature type="chain" id="PRO_0000423843" description="Viral interleukin-6 homolog">
    <location>
        <begin position="23"/>
        <end position="204"/>
    </location>
</feature>
<protein>
    <recommendedName>
        <fullName>Viral interleukin-6 homolog</fullName>
        <shortName>vIL-6</shortName>
    </recommendedName>
</protein>